<accession>Q188A2</accession>
<proteinExistence type="inferred from homology"/>
<keyword id="KW-0028">Amino-acid biosynthesis</keyword>
<keyword id="KW-0055">Arginine biosynthesis</keyword>
<keyword id="KW-0067">ATP-binding</keyword>
<keyword id="KW-0963">Cytoplasm</keyword>
<keyword id="KW-0418">Kinase</keyword>
<keyword id="KW-0547">Nucleotide-binding</keyword>
<keyword id="KW-1185">Reference proteome</keyword>
<keyword id="KW-0808">Transferase</keyword>
<reference key="1">
    <citation type="journal article" date="2006" name="Nat. Genet.">
        <title>The multidrug-resistant human pathogen Clostridium difficile has a highly mobile, mosaic genome.</title>
        <authorList>
            <person name="Sebaihia M."/>
            <person name="Wren B.W."/>
            <person name="Mullany P."/>
            <person name="Fairweather N.F."/>
            <person name="Minton N."/>
            <person name="Stabler R."/>
            <person name="Thomson N.R."/>
            <person name="Roberts A.P."/>
            <person name="Cerdeno-Tarraga A.M."/>
            <person name="Wang H."/>
            <person name="Holden M.T.G."/>
            <person name="Wright A."/>
            <person name="Churcher C."/>
            <person name="Quail M.A."/>
            <person name="Baker S."/>
            <person name="Bason N."/>
            <person name="Brooks K."/>
            <person name="Chillingworth T."/>
            <person name="Cronin A."/>
            <person name="Davis P."/>
            <person name="Dowd L."/>
            <person name="Fraser A."/>
            <person name="Feltwell T."/>
            <person name="Hance Z."/>
            <person name="Holroyd S."/>
            <person name="Jagels K."/>
            <person name="Moule S."/>
            <person name="Mungall K."/>
            <person name="Price C."/>
            <person name="Rabbinowitsch E."/>
            <person name="Sharp S."/>
            <person name="Simmonds M."/>
            <person name="Stevens K."/>
            <person name="Unwin L."/>
            <person name="Whithead S."/>
            <person name="Dupuy B."/>
            <person name="Dougan G."/>
            <person name="Barrell B."/>
            <person name="Parkhill J."/>
        </authorList>
    </citation>
    <scope>NUCLEOTIDE SEQUENCE [LARGE SCALE GENOMIC DNA]</scope>
    <source>
        <strain>630</strain>
    </source>
</reference>
<organism>
    <name type="scientific">Clostridioides difficile (strain 630)</name>
    <name type="common">Peptoclostridium difficile</name>
    <dbReference type="NCBI Taxonomy" id="272563"/>
    <lineage>
        <taxon>Bacteria</taxon>
        <taxon>Bacillati</taxon>
        <taxon>Bacillota</taxon>
        <taxon>Clostridia</taxon>
        <taxon>Peptostreptococcales</taxon>
        <taxon>Peptostreptococcaceae</taxon>
        <taxon>Clostridioides</taxon>
    </lineage>
</organism>
<protein>
    <recommendedName>
        <fullName evidence="1">Acetylglutamate kinase</fullName>
        <ecNumber evidence="1">2.7.2.8</ecNumber>
    </recommendedName>
    <alternativeName>
        <fullName evidence="1">N-acetyl-L-glutamate 5-phosphotransferase</fullName>
    </alternativeName>
    <alternativeName>
        <fullName evidence="1">NAG kinase</fullName>
        <shortName evidence="1">NAGK</shortName>
    </alternativeName>
</protein>
<gene>
    <name evidence="1" type="primary">argB</name>
    <name type="ordered locus">CD630_20320</name>
</gene>
<evidence type="ECO:0000255" key="1">
    <source>
        <dbReference type="HAMAP-Rule" id="MF_00082"/>
    </source>
</evidence>
<sequence length="286" mass="31074">MINIEKANTLIEALPYIEKHQGKTIVVKYGGSAMKKDGLKESVMEDLVLMSYVGINIVLVHGGGAEINKMLAKVDIESKFVNGLRYTDEETMEIVKMVLAGKVNKDLVNKIHTKGGKAVGLCGIDNNMILCDPYKNYELGFVGEIKKVNVELIESCLKSGYISVIATIGVGDDGETYNINGDTAASAIAKELNADKLILLTDVPGLLREPDEEKSLITEVILEDVDKLFEEGIITGGMIPKIEGCVDALNNGVNRVHILDGRVPHSIITELFTDSGIGTLIRKENE</sequence>
<name>ARGB_CLOD6</name>
<dbReference type="EC" id="2.7.2.8" evidence="1"/>
<dbReference type="EMBL" id="AM180355">
    <property type="protein sequence ID" value="CAJ68917.1"/>
    <property type="molecule type" value="Genomic_DNA"/>
</dbReference>
<dbReference type="RefSeq" id="WP_003435171.1">
    <property type="nucleotide sequence ID" value="NZ_JAUPES010000025.1"/>
</dbReference>
<dbReference type="RefSeq" id="YP_001088546.1">
    <property type="nucleotide sequence ID" value="NC_009089.1"/>
</dbReference>
<dbReference type="SMR" id="Q188A2"/>
<dbReference type="STRING" id="272563.CD630_20320"/>
<dbReference type="EnsemblBacteria" id="CAJ68917">
    <property type="protein sequence ID" value="CAJ68917"/>
    <property type="gene ID" value="CD630_20320"/>
</dbReference>
<dbReference type="KEGG" id="cdf:CD630_20320"/>
<dbReference type="KEGG" id="pdc:CDIF630_02253"/>
<dbReference type="PATRIC" id="fig|272563.120.peg.2143"/>
<dbReference type="eggNOG" id="COG0548">
    <property type="taxonomic scope" value="Bacteria"/>
</dbReference>
<dbReference type="OrthoDB" id="9803155at2"/>
<dbReference type="PhylomeDB" id="Q188A2"/>
<dbReference type="BioCyc" id="PDIF272563:G12WB-2180-MONOMER"/>
<dbReference type="UniPathway" id="UPA00068">
    <property type="reaction ID" value="UER00107"/>
</dbReference>
<dbReference type="Proteomes" id="UP000001978">
    <property type="component" value="Chromosome"/>
</dbReference>
<dbReference type="GO" id="GO:0005737">
    <property type="term" value="C:cytoplasm"/>
    <property type="evidence" value="ECO:0007669"/>
    <property type="project" value="UniProtKB-SubCell"/>
</dbReference>
<dbReference type="GO" id="GO:0003991">
    <property type="term" value="F:acetylglutamate kinase activity"/>
    <property type="evidence" value="ECO:0007669"/>
    <property type="project" value="UniProtKB-UniRule"/>
</dbReference>
<dbReference type="GO" id="GO:0005524">
    <property type="term" value="F:ATP binding"/>
    <property type="evidence" value="ECO:0007669"/>
    <property type="project" value="UniProtKB-UniRule"/>
</dbReference>
<dbReference type="GO" id="GO:0042450">
    <property type="term" value="P:arginine biosynthetic process via ornithine"/>
    <property type="evidence" value="ECO:0007669"/>
    <property type="project" value="UniProtKB-UniRule"/>
</dbReference>
<dbReference type="GO" id="GO:0006526">
    <property type="term" value="P:L-arginine biosynthetic process"/>
    <property type="evidence" value="ECO:0007669"/>
    <property type="project" value="UniProtKB-UniPathway"/>
</dbReference>
<dbReference type="CDD" id="cd04250">
    <property type="entry name" value="AAK_NAGK-C"/>
    <property type="match status" value="1"/>
</dbReference>
<dbReference type="FunFam" id="3.40.1160.10:FF:000004">
    <property type="entry name" value="Acetylglutamate kinase"/>
    <property type="match status" value="1"/>
</dbReference>
<dbReference type="Gene3D" id="3.40.1160.10">
    <property type="entry name" value="Acetylglutamate kinase-like"/>
    <property type="match status" value="1"/>
</dbReference>
<dbReference type="HAMAP" id="MF_00082">
    <property type="entry name" value="ArgB"/>
    <property type="match status" value="1"/>
</dbReference>
<dbReference type="InterPro" id="IPR036393">
    <property type="entry name" value="AceGlu_kinase-like_sf"/>
</dbReference>
<dbReference type="InterPro" id="IPR004662">
    <property type="entry name" value="AcgluKinase_fam"/>
</dbReference>
<dbReference type="InterPro" id="IPR037528">
    <property type="entry name" value="ArgB"/>
</dbReference>
<dbReference type="InterPro" id="IPR001048">
    <property type="entry name" value="Asp/Glu/Uridylate_kinase"/>
</dbReference>
<dbReference type="InterPro" id="IPR001057">
    <property type="entry name" value="Glu/AcGlu_kinase"/>
</dbReference>
<dbReference type="InterPro" id="IPR041727">
    <property type="entry name" value="NAGK-C"/>
</dbReference>
<dbReference type="NCBIfam" id="TIGR00761">
    <property type="entry name" value="argB"/>
    <property type="match status" value="1"/>
</dbReference>
<dbReference type="PANTHER" id="PTHR23342">
    <property type="entry name" value="N-ACETYLGLUTAMATE SYNTHASE"/>
    <property type="match status" value="1"/>
</dbReference>
<dbReference type="PANTHER" id="PTHR23342:SF0">
    <property type="entry name" value="N-ACETYLGLUTAMATE SYNTHASE, MITOCHONDRIAL"/>
    <property type="match status" value="1"/>
</dbReference>
<dbReference type="Pfam" id="PF00696">
    <property type="entry name" value="AA_kinase"/>
    <property type="match status" value="1"/>
</dbReference>
<dbReference type="PIRSF" id="PIRSF000728">
    <property type="entry name" value="NAGK"/>
    <property type="match status" value="1"/>
</dbReference>
<dbReference type="PRINTS" id="PR00474">
    <property type="entry name" value="GLU5KINASE"/>
</dbReference>
<dbReference type="SUPFAM" id="SSF53633">
    <property type="entry name" value="Carbamate kinase-like"/>
    <property type="match status" value="1"/>
</dbReference>
<comment type="function">
    <text evidence="1">Catalyzes the ATP-dependent phosphorylation of N-acetyl-L-glutamate.</text>
</comment>
<comment type="catalytic activity">
    <reaction evidence="1">
        <text>N-acetyl-L-glutamate + ATP = N-acetyl-L-glutamyl 5-phosphate + ADP</text>
        <dbReference type="Rhea" id="RHEA:14629"/>
        <dbReference type="ChEBI" id="CHEBI:30616"/>
        <dbReference type="ChEBI" id="CHEBI:44337"/>
        <dbReference type="ChEBI" id="CHEBI:57936"/>
        <dbReference type="ChEBI" id="CHEBI:456216"/>
        <dbReference type="EC" id="2.7.2.8"/>
    </reaction>
</comment>
<comment type="pathway">
    <text evidence="1">Amino-acid biosynthesis; L-arginine biosynthesis; N(2)-acetyl-L-ornithine from L-glutamate: step 2/4.</text>
</comment>
<comment type="subcellular location">
    <subcellularLocation>
        <location evidence="1">Cytoplasm</location>
    </subcellularLocation>
</comment>
<comment type="similarity">
    <text evidence="1">Belongs to the acetylglutamate kinase family. ArgB subfamily.</text>
</comment>
<feature type="chain" id="PRO_0000264694" description="Acetylglutamate kinase">
    <location>
        <begin position="1"/>
        <end position="286"/>
    </location>
</feature>
<feature type="binding site" evidence="1">
    <location>
        <begin position="63"/>
        <end position="64"/>
    </location>
    <ligand>
        <name>substrate</name>
    </ligand>
</feature>
<feature type="binding site" evidence="1">
    <location>
        <position position="85"/>
    </location>
    <ligand>
        <name>substrate</name>
    </ligand>
</feature>
<feature type="binding site" evidence="1">
    <location>
        <position position="178"/>
    </location>
    <ligand>
        <name>substrate</name>
    </ligand>
</feature>
<feature type="site" description="Transition state stabilizer" evidence="1">
    <location>
        <position position="28"/>
    </location>
</feature>
<feature type="site" description="Transition state stabilizer" evidence="1">
    <location>
        <position position="241"/>
    </location>
</feature>